<proteinExistence type="inferred from homology"/>
<reference key="1">
    <citation type="journal article" date="2002" name="Environ. Microbiol.">
        <title>Complete genome sequence and comparative analysis of the metabolically versatile Pseudomonas putida KT2440.</title>
        <authorList>
            <person name="Nelson K.E."/>
            <person name="Weinel C."/>
            <person name="Paulsen I.T."/>
            <person name="Dodson R.J."/>
            <person name="Hilbert H."/>
            <person name="Martins dos Santos V.A.P."/>
            <person name="Fouts D.E."/>
            <person name="Gill S.R."/>
            <person name="Pop M."/>
            <person name="Holmes M."/>
            <person name="Brinkac L.M."/>
            <person name="Beanan M.J."/>
            <person name="DeBoy R.T."/>
            <person name="Daugherty S.C."/>
            <person name="Kolonay J.F."/>
            <person name="Madupu R."/>
            <person name="Nelson W.C."/>
            <person name="White O."/>
            <person name="Peterson J.D."/>
            <person name="Khouri H.M."/>
            <person name="Hance I."/>
            <person name="Chris Lee P."/>
            <person name="Holtzapple E.K."/>
            <person name="Scanlan D."/>
            <person name="Tran K."/>
            <person name="Moazzez A."/>
            <person name="Utterback T.R."/>
            <person name="Rizzo M."/>
            <person name="Lee K."/>
            <person name="Kosack D."/>
            <person name="Moestl D."/>
            <person name="Wedler H."/>
            <person name="Lauber J."/>
            <person name="Stjepandic D."/>
            <person name="Hoheisel J."/>
            <person name="Straetz M."/>
            <person name="Heim S."/>
            <person name="Kiewitz C."/>
            <person name="Eisen J.A."/>
            <person name="Timmis K.N."/>
            <person name="Duesterhoeft A."/>
            <person name="Tuemmler B."/>
            <person name="Fraser C.M."/>
        </authorList>
    </citation>
    <scope>NUCLEOTIDE SEQUENCE [LARGE SCALE GENOMIC DNA]</scope>
    <source>
        <strain>ATCC 47054 / DSM 6125 / CFBP 8728 / NCIMB 11950 / KT2440</strain>
    </source>
</reference>
<accession>Q88E76</accession>
<gene>
    <name type="ordered locus">PP_4590</name>
</gene>
<dbReference type="EMBL" id="AE015451">
    <property type="protein sequence ID" value="AAN70163.1"/>
    <property type="molecule type" value="Genomic_DNA"/>
</dbReference>
<dbReference type="RefSeq" id="NP_746699.1">
    <property type="nucleotide sequence ID" value="NC_002947.4"/>
</dbReference>
<dbReference type="RefSeq" id="WP_010955258.1">
    <property type="nucleotide sequence ID" value="NZ_CP169744.1"/>
</dbReference>
<dbReference type="SMR" id="Q88E76"/>
<dbReference type="STRING" id="160488.PP_4590"/>
<dbReference type="PaxDb" id="160488-PP_4590"/>
<dbReference type="KEGG" id="ppu:PP_4590"/>
<dbReference type="PATRIC" id="fig|160488.4.peg.4894"/>
<dbReference type="eggNOG" id="COG3100">
    <property type="taxonomic scope" value="Bacteria"/>
</dbReference>
<dbReference type="HOGENOM" id="CLU_155118_2_0_6"/>
<dbReference type="OrthoDB" id="7062382at2"/>
<dbReference type="PhylomeDB" id="Q88E76"/>
<dbReference type="BioCyc" id="PPUT160488:G1G01-4898-MONOMER"/>
<dbReference type="Proteomes" id="UP000000556">
    <property type="component" value="Chromosome"/>
</dbReference>
<dbReference type="Gene3D" id="3.10.510.20">
    <property type="entry name" value="YcgL domain"/>
    <property type="match status" value="1"/>
</dbReference>
<dbReference type="HAMAP" id="MF_01866">
    <property type="entry name" value="UPF0745"/>
    <property type="match status" value="1"/>
</dbReference>
<dbReference type="InterPro" id="IPR038068">
    <property type="entry name" value="YcgL-like_sf"/>
</dbReference>
<dbReference type="InterPro" id="IPR027354">
    <property type="entry name" value="YcgL_dom"/>
</dbReference>
<dbReference type="PANTHER" id="PTHR38109">
    <property type="entry name" value="PROTEIN YCGL"/>
    <property type="match status" value="1"/>
</dbReference>
<dbReference type="PANTHER" id="PTHR38109:SF1">
    <property type="entry name" value="PROTEIN YCGL"/>
    <property type="match status" value="1"/>
</dbReference>
<dbReference type="Pfam" id="PF05166">
    <property type="entry name" value="YcgL"/>
    <property type="match status" value="1"/>
</dbReference>
<dbReference type="SUPFAM" id="SSF160191">
    <property type="entry name" value="YcgL-like"/>
    <property type="match status" value="1"/>
</dbReference>
<dbReference type="PROSITE" id="PS51648">
    <property type="entry name" value="YCGL"/>
    <property type="match status" value="1"/>
</dbReference>
<evidence type="ECO:0000255" key="1">
    <source>
        <dbReference type="HAMAP-Rule" id="MF_01866"/>
    </source>
</evidence>
<feature type="chain" id="PRO_0000375337" description="YcgL domain-containing protein PP_4590">
    <location>
        <begin position="1"/>
        <end position="97"/>
    </location>
</feature>
<feature type="domain" description="YcgL" evidence="1">
    <location>
        <begin position="3"/>
        <end position="87"/>
    </location>
</feature>
<keyword id="KW-1185">Reference proteome</keyword>
<organism>
    <name type="scientific">Pseudomonas putida (strain ATCC 47054 / DSM 6125 / CFBP 8728 / NCIMB 11950 / KT2440)</name>
    <dbReference type="NCBI Taxonomy" id="160488"/>
    <lineage>
        <taxon>Bacteria</taxon>
        <taxon>Pseudomonadati</taxon>
        <taxon>Pseudomonadota</taxon>
        <taxon>Gammaproteobacteria</taxon>
        <taxon>Pseudomonadales</taxon>
        <taxon>Pseudomonadaceae</taxon>
        <taxon>Pseudomonas</taxon>
    </lineage>
</organism>
<protein>
    <recommendedName>
        <fullName evidence="1">YcgL domain-containing protein PP_4590</fullName>
    </recommendedName>
</protein>
<sequence>MKRICSIYKSPRKNEMYLYVLKADGLERVPEGLLPFFGTPVHAFDLVLTPERKLAREDITKVLENLESQGYHLQMPPLEDEYIEHLPEELLRRNDPV</sequence>
<name>Y4590_PSEPK</name>